<organism>
    <name type="scientific">Buchnera aphidicola subsp. Cinara cedri (strain Cc)</name>
    <dbReference type="NCBI Taxonomy" id="372461"/>
    <lineage>
        <taxon>Bacteria</taxon>
        <taxon>Pseudomonadati</taxon>
        <taxon>Pseudomonadota</taxon>
        <taxon>Gammaproteobacteria</taxon>
        <taxon>Enterobacterales</taxon>
        <taxon>Erwiniaceae</taxon>
        <taxon>Buchnera</taxon>
    </lineage>
</organism>
<evidence type="ECO:0000255" key="1">
    <source>
        <dbReference type="HAMAP-Rule" id="MF_01445"/>
    </source>
</evidence>
<keyword id="KW-0012">Acyltransferase</keyword>
<keyword id="KW-0963">Cytoplasm</keyword>
<keyword id="KW-0408">Iron</keyword>
<keyword id="KW-0479">Metal-binding</keyword>
<keyword id="KW-1185">Reference proteome</keyword>
<keyword id="KW-0808">Transferase</keyword>
<keyword id="KW-0819">tRNA processing</keyword>
<proteinExistence type="inferred from homology"/>
<gene>
    <name evidence="1" type="primary">tsaD</name>
    <name type="synonym">gcp</name>
    <name type="ordered locus">BCc_037</name>
</gene>
<accession>Q058D1</accession>
<name>TSAD_BUCCC</name>
<sequence>MKILGIETSCDDTSVAIYDKKLGLIDHQTLNQNSVHSKYHGIVPELAARSHLNQLNFLIKNIFSKYFLYNSSNFKKKFFKAVAYTVGPGLSGSIVVHSCRSIALSLDIPYILINHLEGHLLSVMLSYKKNLFPFLALLVSGANTQLIYAKYLGKYIILGQTLDDAVGNVFDYIAKILGLGFPGGKNLSDLAKYGISGKYFFPRPMTKYSNLNFSFSGLKTHVKNVILNSSDSFQEKSNIAKSFEEAIVDTLIIKCKLAIKKIKVKNFLVCGGVSSNRLLRIKLKKLIYKNQRKLYFSKKKFCTDNAGMIAYLGFLKYQQGMYSYNKSFSIYPNLLISDNINYL</sequence>
<dbReference type="EC" id="2.3.1.234" evidence="1"/>
<dbReference type="EMBL" id="CP000263">
    <property type="protein sequence ID" value="ABJ90518.1"/>
    <property type="molecule type" value="Genomic_DNA"/>
</dbReference>
<dbReference type="RefSeq" id="WP_011672437.1">
    <property type="nucleotide sequence ID" value="NC_008513.1"/>
</dbReference>
<dbReference type="SMR" id="Q058D1"/>
<dbReference type="STRING" id="372461.BCc_037"/>
<dbReference type="KEGG" id="bcc:BCc_037"/>
<dbReference type="eggNOG" id="COG0533">
    <property type="taxonomic scope" value="Bacteria"/>
</dbReference>
<dbReference type="HOGENOM" id="CLU_023208_0_0_6"/>
<dbReference type="OrthoDB" id="9806197at2"/>
<dbReference type="Proteomes" id="UP000000669">
    <property type="component" value="Chromosome"/>
</dbReference>
<dbReference type="GO" id="GO:0005737">
    <property type="term" value="C:cytoplasm"/>
    <property type="evidence" value="ECO:0007669"/>
    <property type="project" value="UniProtKB-SubCell"/>
</dbReference>
<dbReference type="GO" id="GO:0005506">
    <property type="term" value="F:iron ion binding"/>
    <property type="evidence" value="ECO:0007669"/>
    <property type="project" value="UniProtKB-UniRule"/>
</dbReference>
<dbReference type="GO" id="GO:0061711">
    <property type="term" value="F:N(6)-L-threonylcarbamoyladenine synthase activity"/>
    <property type="evidence" value="ECO:0007669"/>
    <property type="project" value="UniProtKB-EC"/>
</dbReference>
<dbReference type="GO" id="GO:0002949">
    <property type="term" value="P:tRNA threonylcarbamoyladenosine modification"/>
    <property type="evidence" value="ECO:0007669"/>
    <property type="project" value="UniProtKB-UniRule"/>
</dbReference>
<dbReference type="Gene3D" id="3.30.420.40">
    <property type="match status" value="2"/>
</dbReference>
<dbReference type="HAMAP" id="MF_01445">
    <property type="entry name" value="TsaD"/>
    <property type="match status" value="1"/>
</dbReference>
<dbReference type="InterPro" id="IPR043129">
    <property type="entry name" value="ATPase_NBD"/>
</dbReference>
<dbReference type="InterPro" id="IPR000905">
    <property type="entry name" value="Gcp-like_dom"/>
</dbReference>
<dbReference type="InterPro" id="IPR017861">
    <property type="entry name" value="KAE1/TsaD"/>
</dbReference>
<dbReference type="InterPro" id="IPR017860">
    <property type="entry name" value="Peptidase_M22_CS"/>
</dbReference>
<dbReference type="InterPro" id="IPR022450">
    <property type="entry name" value="TsaD"/>
</dbReference>
<dbReference type="NCBIfam" id="TIGR00329">
    <property type="entry name" value="gcp_kae1"/>
    <property type="match status" value="1"/>
</dbReference>
<dbReference type="NCBIfam" id="TIGR03723">
    <property type="entry name" value="T6A_TsaD_YgjD"/>
    <property type="match status" value="1"/>
</dbReference>
<dbReference type="PANTHER" id="PTHR11735">
    <property type="entry name" value="TRNA N6-ADENOSINE THREONYLCARBAMOYLTRANSFERASE"/>
    <property type="match status" value="1"/>
</dbReference>
<dbReference type="PANTHER" id="PTHR11735:SF6">
    <property type="entry name" value="TRNA N6-ADENOSINE THREONYLCARBAMOYLTRANSFERASE, MITOCHONDRIAL"/>
    <property type="match status" value="1"/>
</dbReference>
<dbReference type="Pfam" id="PF00814">
    <property type="entry name" value="TsaD"/>
    <property type="match status" value="1"/>
</dbReference>
<dbReference type="PRINTS" id="PR00789">
    <property type="entry name" value="OSIALOPTASE"/>
</dbReference>
<dbReference type="SUPFAM" id="SSF53067">
    <property type="entry name" value="Actin-like ATPase domain"/>
    <property type="match status" value="2"/>
</dbReference>
<dbReference type="PROSITE" id="PS01016">
    <property type="entry name" value="GLYCOPROTEASE"/>
    <property type="match status" value="1"/>
</dbReference>
<protein>
    <recommendedName>
        <fullName evidence="1">tRNA N6-adenosine threonylcarbamoyltransferase</fullName>
        <ecNumber evidence="1">2.3.1.234</ecNumber>
    </recommendedName>
    <alternativeName>
        <fullName evidence="1">N6-L-threonylcarbamoyladenine synthase</fullName>
        <shortName evidence="1">t(6)A synthase</shortName>
    </alternativeName>
    <alternativeName>
        <fullName evidence="1">t(6)A37 threonylcarbamoyladenosine biosynthesis protein TsaD</fullName>
    </alternativeName>
    <alternativeName>
        <fullName evidence="1">tRNA threonylcarbamoyladenosine biosynthesis protein TsaD</fullName>
    </alternativeName>
</protein>
<comment type="function">
    <text evidence="1">Required for the formation of a threonylcarbamoyl group on adenosine at position 37 (t(6)A37) in tRNAs that read codons beginning with adenine. Is involved in the transfer of the threonylcarbamoyl moiety of threonylcarbamoyl-AMP (TC-AMP) to the N6 group of A37, together with TsaE and TsaB. TsaD likely plays a direct catalytic role in this reaction.</text>
</comment>
<comment type="catalytic activity">
    <reaction evidence="1">
        <text>L-threonylcarbamoyladenylate + adenosine(37) in tRNA = N(6)-L-threonylcarbamoyladenosine(37) in tRNA + AMP + H(+)</text>
        <dbReference type="Rhea" id="RHEA:37059"/>
        <dbReference type="Rhea" id="RHEA-COMP:10162"/>
        <dbReference type="Rhea" id="RHEA-COMP:10163"/>
        <dbReference type="ChEBI" id="CHEBI:15378"/>
        <dbReference type="ChEBI" id="CHEBI:73682"/>
        <dbReference type="ChEBI" id="CHEBI:74411"/>
        <dbReference type="ChEBI" id="CHEBI:74418"/>
        <dbReference type="ChEBI" id="CHEBI:456215"/>
        <dbReference type="EC" id="2.3.1.234"/>
    </reaction>
</comment>
<comment type="cofactor">
    <cofactor evidence="1">
        <name>Fe(2+)</name>
        <dbReference type="ChEBI" id="CHEBI:29033"/>
    </cofactor>
    <text evidence="1">Binds 1 Fe(2+) ion per subunit.</text>
</comment>
<comment type="subcellular location">
    <subcellularLocation>
        <location evidence="1">Cytoplasm</location>
    </subcellularLocation>
</comment>
<comment type="similarity">
    <text evidence="1">Belongs to the KAE1 / TsaD family.</text>
</comment>
<feature type="chain" id="PRO_0000303298" description="tRNA N6-adenosine threonylcarbamoyltransferase">
    <location>
        <begin position="1"/>
        <end position="343"/>
    </location>
</feature>
<feature type="binding site" evidence="1">
    <location>
        <position position="115"/>
    </location>
    <ligand>
        <name>Fe cation</name>
        <dbReference type="ChEBI" id="CHEBI:24875"/>
    </ligand>
</feature>
<feature type="binding site" evidence="1">
    <location>
        <position position="119"/>
    </location>
    <ligand>
        <name>Fe cation</name>
        <dbReference type="ChEBI" id="CHEBI:24875"/>
    </ligand>
</feature>
<feature type="binding site" evidence="1">
    <location>
        <begin position="138"/>
        <end position="142"/>
    </location>
    <ligand>
        <name>substrate</name>
    </ligand>
</feature>
<feature type="binding site" evidence="1">
    <location>
        <position position="171"/>
    </location>
    <ligand>
        <name>substrate</name>
    </ligand>
</feature>
<feature type="binding site" evidence="1">
    <location>
        <position position="184"/>
    </location>
    <ligand>
        <name>substrate</name>
    </ligand>
</feature>
<feature type="binding site" evidence="1">
    <location>
        <position position="276"/>
    </location>
    <ligand>
        <name>substrate</name>
    </ligand>
</feature>
<feature type="binding site" evidence="1">
    <location>
        <position position="304"/>
    </location>
    <ligand>
        <name>Fe cation</name>
        <dbReference type="ChEBI" id="CHEBI:24875"/>
    </ligand>
</feature>
<reference key="1">
    <citation type="journal article" date="2006" name="Science">
        <title>A small microbial genome: the end of a long symbiotic relationship?</title>
        <authorList>
            <person name="Perez-Brocal V."/>
            <person name="Gil R."/>
            <person name="Ramos S."/>
            <person name="Lamelas A."/>
            <person name="Postigo M."/>
            <person name="Michelena J.M."/>
            <person name="Silva F.J."/>
            <person name="Moya A."/>
            <person name="Latorre A."/>
        </authorList>
    </citation>
    <scope>NUCLEOTIDE SEQUENCE [LARGE SCALE GENOMIC DNA]</scope>
    <source>
        <strain>Cc</strain>
    </source>
</reference>